<reference key="1">
    <citation type="journal article" date="2002" name="Nat. Genet.">
        <title>Genome sequence of the endocellular obligate symbiont of tsetse flies, Wigglesworthia glossinidia.</title>
        <authorList>
            <person name="Akman L."/>
            <person name="Yamashita A."/>
            <person name="Watanabe H."/>
            <person name="Oshima K."/>
            <person name="Shiba T."/>
            <person name="Hattori M."/>
            <person name="Aksoy S."/>
        </authorList>
    </citation>
    <scope>NUCLEOTIDE SEQUENCE [LARGE SCALE GENOMIC DNA]</scope>
</reference>
<sequence length="298" mass="33815">MFTGSIVALITPMKKSGKIDFDSIKGLIEYHIVNNTSAILAIGTTGENFSLTFEEQCNIVKYIFETCDKKIPVIAGIISSNIENIKKQINFYNKINISGILISTPYYSCPTQNGIFNYFKEISKNTDIPQIIYNNPKRTGCDILPETVSKLSYIKNIIGIKDSSKDLSRVKKIKFFSKKNFCLLCGDDINILDFMQLGGCGVISTAANIIAYESSSLCRLINNRHYYKAEKLYYNILDLYKILLIAPNPTPIKWACNFLGLIKTKYIRLPMIGLNKKEIFMFKKILNKIKLKSKINCI</sequence>
<protein>
    <recommendedName>
        <fullName evidence="1">4-hydroxy-tetrahydrodipicolinate synthase</fullName>
        <shortName evidence="1">HTPA synthase</shortName>
        <ecNumber evidence="1">4.3.3.7</ecNumber>
    </recommendedName>
</protein>
<gene>
    <name evidence="1" type="primary">dapA</name>
    <name type="ordered locus">WIGBR3310</name>
</gene>
<proteinExistence type="inferred from homology"/>
<organism>
    <name type="scientific">Wigglesworthia glossinidia brevipalpis</name>
    <dbReference type="NCBI Taxonomy" id="36870"/>
    <lineage>
        <taxon>Bacteria</taxon>
        <taxon>Pseudomonadati</taxon>
        <taxon>Pseudomonadota</taxon>
        <taxon>Gammaproteobacteria</taxon>
        <taxon>Enterobacterales</taxon>
        <taxon>Erwiniaceae</taxon>
        <taxon>Wigglesworthia</taxon>
    </lineage>
</organism>
<dbReference type="EC" id="4.3.3.7" evidence="1"/>
<dbReference type="EMBL" id="BA000021">
    <property type="protein sequence ID" value="BAC24477.1"/>
    <property type="molecule type" value="Genomic_DNA"/>
</dbReference>
<dbReference type="SMR" id="Q8D2M3"/>
<dbReference type="STRING" id="36870.gene:10368830"/>
<dbReference type="KEGG" id="wbr:dapA"/>
<dbReference type="eggNOG" id="COG0329">
    <property type="taxonomic scope" value="Bacteria"/>
</dbReference>
<dbReference type="HOGENOM" id="CLU_049343_7_0_6"/>
<dbReference type="OrthoDB" id="9782828at2"/>
<dbReference type="UniPathway" id="UPA00034">
    <property type="reaction ID" value="UER00017"/>
</dbReference>
<dbReference type="Proteomes" id="UP000000562">
    <property type="component" value="Chromosome"/>
</dbReference>
<dbReference type="GO" id="GO:0005829">
    <property type="term" value="C:cytosol"/>
    <property type="evidence" value="ECO:0007669"/>
    <property type="project" value="TreeGrafter"/>
</dbReference>
<dbReference type="GO" id="GO:0008840">
    <property type="term" value="F:4-hydroxy-tetrahydrodipicolinate synthase activity"/>
    <property type="evidence" value="ECO:0007669"/>
    <property type="project" value="UniProtKB-UniRule"/>
</dbReference>
<dbReference type="GO" id="GO:0019877">
    <property type="term" value="P:diaminopimelate biosynthetic process"/>
    <property type="evidence" value="ECO:0007669"/>
    <property type="project" value="UniProtKB-UniRule"/>
</dbReference>
<dbReference type="GO" id="GO:0009089">
    <property type="term" value="P:lysine biosynthetic process via diaminopimelate"/>
    <property type="evidence" value="ECO:0007669"/>
    <property type="project" value="UniProtKB-UniRule"/>
</dbReference>
<dbReference type="CDD" id="cd00950">
    <property type="entry name" value="DHDPS"/>
    <property type="match status" value="1"/>
</dbReference>
<dbReference type="Gene3D" id="3.20.20.70">
    <property type="entry name" value="Aldolase class I"/>
    <property type="match status" value="1"/>
</dbReference>
<dbReference type="HAMAP" id="MF_00418">
    <property type="entry name" value="DapA"/>
    <property type="match status" value="1"/>
</dbReference>
<dbReference type="InterPro" id="IPR013785">
    <property type="entry name" value="Aldolase_TIM"/>
</dbReference>
<dbReference type="InterPro" id="IPR005263">
    <property type="entry name" value="DapA"/>
</dbReference>
<dbReference type="InterPro" id="IPR002220">
    <property type="entry name" value="DapA-like"/>
</dbReference>
<dbReference type="InterPro" id="IPR020625">
    <property type="entry name" value="Schiff_base-form_aldolases_AS"/>
</dbReference>
<dbReference type="InterPro" id="IPR020624">
    <property type="entry name" value="Schiff_base-form_aldolases_CS"/>
</dbReference>
<dbReference type="NCBIfam" id="TIGR00674">
    <property type="entry name" value="dapA"/>
    <property type="match status" value="1"/>
</dbReference>
<dbReference type="PANTHER" id="PTHR12128:SF66">
    <property type="entry name" value="4-HYDROXY-2-OXOGLUTARATE ALDOLASE, MITOCHONDRIAL"/>
    <property type="match status" value="1"/>
</dbReference>
<dbReference type="PANTHER" id="PTHR12128">
    <property type="entry name" value="DIHYDRODIPICOLINATE SYNTHASE"/>
    <property type="match status" value="1"/>
</dbReference>
<dbReference type="Pfam" id="PF00701">
    <property type="entry name" value="DHDPS"/>
    <property type="match status" value="1"/>
</dbReference>
<dbReference type="PIRSF" id="PIRSF001365">
    <property type="entry name" value="DHDPS"/>
    <property type="match status" value="1"/>
</dbReference>
<dbReference type="PRINTS" id="PR00146">
    <property type="entry name" value="DHPICSNTHASE"/>
</dbReference>
<dbReference type="SMART" id="SM01130">
    <property type="entry name" value="DHDPS"/>
    <property type="match status" value="1"/>
</dbReference>
<dbReference type="SUPFAM" id="SSF51569">
    <property type="entry name" value="Aldolase"/>
    <property type="match status" value="1"/>
</dbReference>
<dbReference type="PROSITE" id="PS00665">
    <property type="entry name" value="DHDPS_1"/>
    <property type="match status" value="1"/>
</dbReference>
<dbReference type="PROSITE" id="PS00666">
    <property type="entry name" value="DHDPS_2"/>
    <property type="match status" value="1"/>
</dbReference>
<accession>Q8D2M3</accession>
<comment type="function">
    <text evidence="1">Catalyzes the condensation of (S)-aspartate-beta-semialdehyde [(S)-ASA] and pyruvate to 4-hydroxy-tetrahydrodipicolinate (HTPA).</text>
</comment>
<comment type="catalytic activity">
    <reaction evidence="1">
        <text>L-aspartate 4-semialdehyde + pyruvate = (2S,4S)-4-hydroxy-2,3,4,5-tetrahydrodipicolinate + H2O + H(+)</text>
        <dbReference type="Rhea" id="RHEA:34171"/>
        <dbReference type="ChEBI" id="CHEBI:15361"/>
        <dbReference type="ChEBI" id="CHEBI:15377"/>
        <dbReference type="ChEBI" id="CHEBI:15378"/>
        <dbReference type="ChEBI" id="CHEBI:67139"/>
        <dbReference type="ChEBI" id="CHEBI:537519"/>
        <dbReference type="EC" id="4.3.3.7"/>
    </reaction>
</comment>
<comment type="pathway">
    <text evidence="1">Amino-acid biosynthesis; L-lysine biosynthesis via DAP pathway; (S)-tetrahydrodipicolinate from L-aspartate: step 3/4.</text>
</comment>
<comment type="subunit">
    <text evidence="1">Homotetramer; dimer of dimers.</text>
</comment>
<comment type="subcellular location">
    <subcellularLocation>
        <location evidence="1">Cytoplasm</location>
    </subcellularLocation>
</comment>
<comment type="similarity">
    <text evidence="1">Belongs to the DapA family.</text>
</comment>
<comment type="caution">
    <text evidence="2">Was originally thought to be a dihydrodipicolinate synthase (DHDPS), catalyzing the condensation of (S)-aspartate-beta-semialdehyde [(S)-ASA] and pyruvate to dihydrodipicolinate (DHDP). However, it was shown in E.coli that the product of the enzymatic reaction is not dihydrodipicolinate but in fact (4S)-4-hydroxy-2,3,4,5-tetrahydro-(2S)-dipicolinic acid (HTPA), and that the consecutive dehydration reaction leading to DHDP is not spontaneous but catalyzed by DapB.</text>
</comment>
<name>DAPA_WIGBR</name>
<keyword id="KW-0028">Amino-acid biosynthesis</keyword>
<keyword id="KW-0963">Cytoplasm</keyword>
<keyword id="KW-0220">Diaminopimelate biosynthesis</keyword>
<keyword id="KW-0456">Lyase</keyword>
<keyword id="KW-0457">Lysine biosynthesis</keyword>
<keyword id="KW-1185">Reference proteome</keyword>
<keyword id="KW-0704">Schiff base</keyword>
<feature type="chain" id="PRO_0000103183" description="4-hydroxy-tetrahydrodipicolinate synthase">
    <location>
        <begin position="1"/>
        <end position="298"/>
    </location>
</feature>
<feature type="active site" description="Proton donor/acceptor" evidence="1">
    <location>
        <position position="133"/>
    </location>
</feature>
<feature type="active site" description="Schiff-base intermediate with substrate" evidence="1">
    <location>
        <position position="161"/>
    </location>
</feature>
<feature type="binding site" evidence="1">
    <location>
        <position position="45"/>
    </location>
    <ligand>
        <name>pyruvate</name>
        <dbReference type="ChEBI" id="CHEBI:15361"/>
    </ligand>
</feature>
<feature type="binding site" evidence="1">
    <location>
        <position position="203"/>
    </location>
    <ligand>
        <name>pyruvate</name>
        <dbReference type="ChEBI" id="CHEBI:15361"/>
    </ligand>
</feature>
<feature type="site" description="Part of a proton relay during catalysis" evidence="1">
    <location>
        <position position="44"/>
    </location>
</feature>
<feature type="site" description="Part of a proton relay during catalysis" evidence="1">
    <location>
        <position position="107"/>
    </location>
</feature>
<evidence type="ECO:0000255" key="1">
    <source>
        <dbReference type="HAMAP-Rule" id="MF_00418"/>
    </source>
</evidence>
<evidence type="ECO:0000305" key="2"/>